<evidence type="ECO:0000255" key="1">
    <source>
        <dbReference type="HAMAP-Rule" id="MF_01310"/>
    </source>
</evidence>
<evidence type="ECO:0000305" key="2"/>
<reference key="1">
    <citation type="submission" date="2006-03" db="EMBL/GenBank/DDBJ databases">
        <title>Complete sequence of Shewanella denitrificans OS217.</title>
        <authorList>
            <consortium name="US DOE Joint Genome Institute"/>
            <person name="Copeland A."/>
            <person name="Lucas S."/>
            <person name="Lapidus A."/>
            <person name="Barry K."/>
            <person name="Detter J.C."/>
            <person name="Glavina del Rio T."/>
            <person name="Hammon N."/>
            <person name="Israni S."/>
            <person name="Dalin E."/>
            <person name="Tice H."/>
            <person name="Pitluck S."/>
            <person name="Brettin T."/>
            <person name="Bruce D."/>
            <person name="Han C."/>
            <person name="Tapia R."/>
            <person name="Gilna P."/>
            <person name="Kiss H."/>
            <person name="Schmutz J."/>
            <person name="Larimer F."/>
            <person name="Land M."/>
            <person name="Hauser L."/>
            <person name="Kyrpides N."/>
            <person name="Lykidis A."/>
            <person name="Richardson P."/>
        </authorList>
    </citation>
    <scope>NUCLEOTIDE SEQUENCE [LARGE SCALE GENOMIC DNA]</scope>
    <source>
        <strain>OS217 / ATCC BAA-1090 / DSM 15013</strain>
    </source>
</reference>
<name>RS11_SHEDO</name>
<feature type="chain" id="PRO_0000294849" description="Small ribosomal subunit protein uS11">
    <location>
        <begin position="1"/>
        <end position="130"/>
    </location>
</feature>
<accession>Q12ST6</accession>
<proteinExistence type="inferred from homology"/>
<keyword id="KW-1185">Reference proteome</keyword>
<keyword id="KW-0687">Ribonucleoprotein</keyword>
<keyword id="KW-0689">Ribosomal protein</keyword>
<keyword id="KW-0694">RNA-binding</keyword>
<keyword id="KW-0699">rRNA-binding</keyword>
<sequence length="130" mass="13934">MAKVPSRSPRKRVRKQVADGMAHIHASFNNTIVTITDRQGNALSWATSGGSGFRGSRKSTPFAAQVAAERAGIAAQDYGLKNLEVFVKGPGPGRESAIRALNAVGYKITNITDVTPIPHNGCRPPKKRRV</sequence>
<comment type="function">
    <text evidence="1">Located on the platform of the 30S subunit, it bridges several disparate RNA helices of the 16S rRNA. Forms part of the Shine-Dalgarno cleft in the 70S ribosome.</text>
</comment>
<comment type="subunit">
    <text evidence="1">Part of the 30S ribosomal subunit. Interacts with proteins S7 and S18. Binds to IF-3.</text>
</comment>
<comment type="similarity">
    <text evidence="1">Belongs to the universal ribosomal protein uS11 family.</text>
</comment>
<organism>
    <name type="scientific">Shewanella denitrificans (strain OS217 / ATCC BAA-1090 / DSM 15013)</name>
    <dbReference type="NCBI Taxonomy" id="318161"/>
    <lineage>
        <taxon>Bacteria</taxon>
        <taxon>Pseudomonadati</taxon>
        <taxon>Pseudomonadota</taxon>
        <taxon>Gammaproteobacteria</taxon>
        <taxon>Alteromonadales</taxon>
        <taxon>Shewanellaceae</taxon>
        <taxon>Shewanella</taxon>
    </lineage>
</organism>
<dbReference type="EMBL" id="CP000302">
    <property type="protein sequence ID" value="ABE53490.1"/>
    <property type="molecule type" value="Genomic_DNA"/>
</dbReference>
<dbReference type="RefSeq" id="WP_011494657.1">
    <property type="nucleotide sequence ID" value="NC_007954.1"/>
</dbReference>
<dbReference type="SMR" id="Q12ST6"/>
<dbReference type="STRING" id="318161.Sden_0193"/>
<dbReference type="KEGG" id="sdn:Sden_0193"/>
<dbReference type="eggNOG" id="COG0100">
    <property type="taxonomic scope" value="Bacteria"/>
</dbReference>
<dbReference type="HOGENOM" id="CLU_072439_5_0_6"/>
<dbReference type="OrthoDB" id="9806415at2"/>
<dbReference type="Proteomes" id="UP000001982">
    <property type="component" value="Chromosome"/>
</dbReference>
<dbReference type="GO" id="GO:1990904">
    <property type="term" value="C:ribonucleoprotein complex"/>
    <property type="evidence" value="ECO:0007669"/>
    <property type="project" value="UniProtKB-KW"/>
</dbReference>
<dbReference type="GO" id="GO:0005840">
    <property type="term" value="C:ribosome"/>
    <property type="evidence" value="ECO:0007669"/>
    <property type="project" value="UniProtKB-KW"/>
</dbReference>
<dbReference type="GO" id="GO:0019843">
    <property type="term" value="F:rRNA binding"/>
    <property type="evidence" value="ECO:0007669"/>
    <property type="project" value="UniProtKB-UniRule"/>
</dbReference>
<dbReference type="GO" id="GO:0003735">
    <property type="term" value="F:structural constituent of ribosome"/>
    <property type="evidence" value="ECO:0007669"/>
    <property type="project" value="InterPro"/>
</dbReference>
<dbReference type="GO" id="GO:0006412">
    <property type="term" value="P:translation"/>
    <property type="evidence" value="ECO:0007669"/>
    <property type="project" value="UniProtKB-UniRule"/>
</dbReference>
<dbReference type="FunFam" id="3.30.420.80:FF:000001">
    <property type="entry name" value="30S ribosomal protein S11"/>
    <property type="match status" value="1"/>
</dbReference>
<dbReference type="Gene3D" id="3.30.420.80">
    <property type="entry name" value="Ribosomal protein S11"/>
    <property type="match status" value="1"/>
</dbReference>
<dbReference type="HAMAP" id="MF_01310">
    <property type="entry name" value="Ribosomal_uS11"/>
    <property type="match status" value="1"/>
</dbReference>
<dbReference type="InterPro" id="IPR001971">
    <property type="entry name" value="Ribosomal_uS11"/>
</dbReference>
<dbReference type="InterPro" id="IPR019981">
    <property type="entry name" value="Ribosomal_uS11_bac-type"/>
</dbReference>
<dbReference type="InterPro" id="IPR018102">
    <property type="entry name" value="Ribosomal_uS11_CS"/>
</dbReference>
<dbReference type="InterPro" id="IPR036967">
    <property type="entry name" value="Ribosomal_uS11_sf"/>
</dbReference>
<dbReference type="NCBIfam" id="NF003698">
    <property type="entry name" value="PRK05309.1"/>
    <property type="match status" value="1"/>
</dbReference>
<dbReference type="NCBIfam" id="TIGR03632">
    <property type="entry name" value="uS11_bact"/>
    <property type="match status" value="1"/>
</dbReference>
<dbReference type="PANTHER" id="PTHR11759">
    <property type="entry name" value="40S RIBOSOMAL PROTEIN S14/30S RIBOSOMAL PROTEIN S11"/>
    <property type="match status" value="1"/>
</dbReference>
<dbReference type="Pfam" id="PF00411">
    <property type="entry name" value="Ribosomal_S11"/>
    <property type="match status" value="1"/>
</dbReference>
<dbReference type="PIRSF" id="PIRSF002131">
    <property type="entry name" value="Ribosomal_S11"/>
    <property type="match status" value="1"/>
</dbReference>
<dbReference type="SUPFAM" id="SSF53137">
    <property type="entry name" value="Translational machinery components"/>
    <property type="match status" value="1"/>
</dbReference>
<dbReference type="PROSITE" id="PS00054">
    <property type="entry name" value="RIBOSOMAL_S11"/>
    <property type="match status" value="1"/>
</dbReference>
<gene>
    <name evidence="1" type="primary">rpsK</name>
    <name type="ordered locus">Sden_0193</name>
</gene>
<protein>
    <recommendedName>
        <fullName evidence="1">Small ribosomal subunit protein uS11</fullName>
    </recommendedName>
    <alternativeName>
        <fullName evidence="2">30S ribosomal protein S11</fullName>
    </alternativeName>
</protein>